<organism>
    <name type="scientific">Pseudomonas syringae pv. syringae (strain B728a)</name>
    <dbReference type="NCBI Taxonomy" id="205918"/>
    <lineage>
        <taxon>Bacteria</taxon>
        <taxon>Pseudomonadati</taxon>
        <taxon>Pseudomonadota</taxon>
        <taxon>Gammaproteobacteria</taxon>
        <taxon>Pseudomonadales</taxon>
        <taxon>Pseudomonadaceae</taxon>
        <taxon>Pseudomonas</taxon>
        <taxon>Pseudomonas syringae</taxon>
    </lineage>
</organism>
<sequence length="591" mass="66340">MMRSHYCGQLNESLEGQEITLCGWVHRRRDHGGVIFLDIRDREGMAQVVFDPDRADSFAAADRVRSEYVVKVVGKVRARPAGAVNANMASGAIEVLGYELEVLNESETPPFPLNEYSDVGEETRLRYRFIDLRRPEMAEKLRLRSRITTSIRRYLDDNGFLDVETPILTRATPEGARDYLVPSRTHPGSFFALPQSPQLFKQLLMVAGFDRYYQIAKCFRDEDLRADRQPEFTQIDIETSFLNEEDIIGLTEKMVRQLFKEVLDLEFGDFPHMTFEEAMRRYGSDKPDLRNPLELVDVADQLTGVEFKVFSGPANDPKGRVAALRVPGAASMARSQIDDYTKFVSIYGAKGLAYIKVNERAKGPEGLQSPIVKFIPEDNLNVILDRVGAVDGDIVFFGADKFKIVSEALGALRIKIGNDLKLHTCEWAPMWVVDFPMFEENDDGSFTALHHPFTAPKCTPEELEANPATALSRAYDMVLNGTELGGGSIRIHRKEMQQAVFRLLGIAEDEQQEKFGFLLDALKYGAPPHGGLAFGLDRLVMLMTGAQSIREVIAFPKTQSAADVMTQAPGVVDAKALRELHIRLREQPKAE</sequence>
<comment type="function">
    <text evidence="1">Aspartyl-tRNA synthetase with relaxed tRNA specificity since it is able to aspartylate not only its cognate tRNA(Asp) but also tRNA(Asn). Reaction proceeds in two steps: L-aspartate is first activated by ATP to form Asp-AMP and then transferred to the acceptor end of tRNA(Asp/Asn).</text>
</comment>
<comment type="catalytic activity">
    <reaction evidence="1">
        <text>tRNA(Asx) + L-aspartate + ATP = L-aspartyl-tRNA(Asx) + AMP + diphosphate</text>
        <dbReference type="Rhea" id="RHEA:18349"/>
        <dbReference type="Rhea" id="RHEA-COMP:9710"/>
        <dbReference type="Rhea" id="RHEA-COMP:9711"/>
        <dbReference type="ChEBI" id="CHEBI:29991"/>
        <dbReference type="ChEBI" id="CHEBI:30616"/>
        <dbReference type="ChEBI" id="CHEBI:33019"/>
        <dbReference type="ChEBI" id="CHEBI:78442"/>
        <dbReference type="ChEBI" id="CHEBI:78516"/>
        <dbReference type="ChEBI" id="CHEBI:456215"/>
        <dbReference type="EC" id="6.1.1.23"/>
    </reaction>
</comment>
<comment type="subunit">
    <text evidence="1">Homodimer.</text>
</comment>
<comment type="subcellular location">
    <subcellularLocation>
        <location evidence="1">Cytoplasm</location>
    </subcellularLocation>
</comment>
<comment type="similarity">
    <text evidence="1">Belongs to the class-II aminoacyl-tRNA synthetase family. Type 1 subfamily.</text>
</comment>
<gene>
    <name evidence="1" type="primary">aspS</name>
    <name type="ordered locus">Psyr_1406</name>
</gene>
<protein>
    <recommendedName>
        <fullName evidence="1">Aspartate--tRNA(Asp/Asn) ligase</fullName>
        <ecNumber evidence="1">6.1.1.23</ecNumber>
    </recommendedName>
    <alternativeName>
        <fullName evidence="1">Aspartyl-tRNA synthetase</fullName>
        <shortName evidence="1">AspRS</shortName>
    </alternativeName>
    <alternativeName>
        <fullName evidence="1">Non-discriminating aspartyl-tRNA synthetase</fullName>
        <shortName evidence="1">ND-AspRS</shortName>
    </alternativeName>
</protein>
<name>SYDND_PSEU2</name>
<reference key="1">
    <citation type="journal article" date="2005" name="Proc. Natl. Acad. Sci. U.S.A.">
        <title>Comparison of the complete genome sequences of Pseudomonas syringae pv. syringae B728a and pv. tomato DC3000.</title>
        <authorList>
            <person name="Feil H."/>
            <person name="Feil W.S."/>
            <person name="Chain P."/>
            <person name="Larimer F."/>
            <person name="Dibartolo G."/>
            <person name="Copeland A."/>
            <person name="Lykidis A."/>
            <person name="Trong S."/>
            <person name="Nolan M."/>
            <person name="Goltsman E."/>
            <person name="Thiel J."/>
            <person name="Malfatti S."/>
            <person name="Loper J.E."/>
            <person name="Lapidus A."/>
            <person name="Detter J.C."/>
            <person name="Land M."/>
            <person name="Richardson P.M."/>
            <person name="Kyrpides N.C."/>
            <person name="Ivanova N."/>
            <person name="Lindow S.E."/>
        </authorList>
    </citation>
    <scope>NUCLEOTIDE SEQUENCE [LARGE SCALE GENOMIC DNA]</scope>
    <source>
        <strain>B728a</strain>
    </source>
</reference>
<proteinExistence type="inferred from homology"/>
<dbReference type="EC" id="6.1.1.23" evidence="1"/>
<dbReference type="EMBL" id="CP000075">
    <property type="protein sequence ID" value="AAY36457.1"/>
    <property type="molecule type" value="Genomic_DNA"/>
</dbReference>
<dbReference type="RefSeq" id="WP_002554661.1">
    <property type="nucleotide sequence ID" value="NC_007005.1"/>
</dbReference>
<dbReference type="RefSeq" id="YP_234495.1">
    <property type="nucleotide sequence ID" value="NC_007005.1"/>
</dbReference>
<dbReference type="SMR" id="Q4ZWL5"/>
<dbReference type="STRING" id="205918.Psyr_1406"/>
<dbReference type="GeneID" id="96217807"/>
<dbReference type="KEGG" id="psb:Psyr_1406"/>
<dbReference type="PATRIC" id="fig|205918.7.peg.1442"/>
<dbReference type="eggNOG" id="COG0173">
    <property type="taxonomic scope" value="Bacteria"/>
</dbReference>
<dbReference type="HOGENOM" id="CLU_014330_3_2_6"/>
<dbReference type="OrthoDB" id="9802326at2"/>
<dbReference type="Proteomes" id="UP000000426">
    <property type="component" value="Chromosome"/>
</dbReference>
<dbReference type="GO" id="GO:0005737">
    <property type="term" value="C:cytoplasm"/>
    <property type="evidence" value="ECO:0007669"/>
    <property type="project" value="UniProtKB-SubCell"/>
</dbReference>
<dbReference type="GO" id="GO:0004815">
    <property type="term" value="F:aspartate-tRNA ligase activity"/>
    <property type="evidence" value="ECO:0007669"/>
    <property type="project" value="UniProtKB-UniRule"/>
</dbReference>
<dbReference type="GO" id="GO:0050560">
    <property type="term" value="F:aspartate-tRNA(Asn) ligase activity"/>
    <property type="evidence" value="ECO:0007669"/>
    <property type="project" value="UniProtKB-EC"/>
</dbReference>
<dbReference type="GO" id="GO:0005524">
    <property type="term" value="F:ATP binding"/>
    <property type="evidence" value="ECO:0007669"/>
    <property type="project" value="UniProtKB-UniRule"/>
</dbReference>
<dbReference type="GO" id="GO:0003676">
    <property type="term" value="F:nucleic acid binding"/>
    <property type="evidence" value="ECO:0007669"/>
    <property type="project" value="InterPro"/>
</dbReference>
<dbReference type="GO" id="GO:0006422">
    <property type="term" value="P:aspartyl-tRNA aminoacylation"/>
    <property type="evidence" value="ECO:0007669"/>
    <property type="project" value="UniProtKB-UniRule"/>
</dbReference>
<dbReference type="CDD" id="cd00777">
    <property type="entry name" value="AspRS_core"/>
    <property type="match status" value="1"/>
</dbReference>
<dbReference type="CDD" id="cd04317">
    <property type="entry name" value="EcAspRS_like_N"/>
    <property type="match status" value="1"/>
</dbReference>
<dbReference type="Gene3D" id="3.30.930.10">
    <property type="entry name" value="Bira Bifunctional Protein, Domain 2"/>
    <property type="match status" value="1"/>
</dbReference>
<dbReference type="Gene3D" id="3.30.1360.30">
    <property type="entry name" value="GAD-like domain"/>
    <property type="match status" value="1"/>
</dbReference>
<dbReference type="Gene3D" id="2.40.50.140">
    <property type="entry name" value="Nucleic acid-binding proteins"/>
    <property type="match status" value="1"/>
</dbReference>
<dbReference type="HAMAP" id="MF_00044">
    <property type="entry name" value="Asp_tRNA_synth_type1"/>
    <property type="match status" value="1"/>
</dbReference>
<dbReference type="InterPro" id="IPR004364">
    <property type="entry name" value="Aa-tRNA-synt_II"/>
</dbReference>
<dbReference type="InterPro" id="IPR006195">
    <property type="entry name" value="aa-tRNA-synth_II"/>
</dbReference>
<dbReference type="InterPro" id="IPR045864">
    <property type="entry name" value="aa-tRNA-synth_II/BPL/LPL"/>
</dbReference>
<dbReference type="InterPro" id="IPR004524">
    <property type="entry name" value="Asp-tRNA-ligase_1"/>
</dbReference>
<dbReference type="InterPro" id="IPR047089">
    <property type="entry name" value="Asp-tRNA-ligase_1_N"/>
</dbReference>
<dbReference type="InterPro" id="IPR002312">
    <property type="entry name" value="Asp/Asn-tRNA-synth_IIb"/>
</dbReference>
<dbReference type="InterPro" id="IPR047090">
    <property type="entry name" value="AspRS_core"/>
</dbReference>
<dbReference type="InterPro" id="IPR004115">
    <property type="entry name" value="GAD-like_sf"/>
</dbReference>
<dbReference type="InterPro" id="IPR029351">
    <property type="entry name" value="GAD_dom"/>
</dbReference>
<dbReference type="InterPro" id="IPR012340">
    <property type="entry name" value="NA-bd_OB-fold"/>
</dbReference>
<dbReference type="InterPro" id="IPR004365">
    <property type="entry name" value="NA-bd_OB_tRNA"/>
</dbReference>
<dbReference type="NCBIfam" id="TIGR00459">
    <property type="entry name" value="aspS_bact"/>
    <property type="match status" value="1"/>
</dbReference>
<dbReference type="NCBIfam" id="NF001750">
    <property type="entry name" value="PRK00476.1"/>
    <property type="match status" value="1"/>
</dbReference>
<dbReference type="PANTHER" id="PTHR22594:SF5">
    <property type="entry name" value="ASPARTATE--TRNA LIGASE, MITOCHONDRIAL"/>
    <property type="match status" value="1"/>
</dbReference>
<dbReference type="PANTHER" id="PTHR22594">
    <property type="entry name" value="ASPARTYL/LYSYL-TRNA SYNTHETASE"/>
    <property type="match status" value="1"/>
</dbReference>
<dbReference type="Pfam" id="PF02938">
    <property type="entry name" value="GAD"/>
    <property type="match status" value="1"/>
</dbReference>
<dbReference type="Pfam" id="PF00152">
    <property type="entry name" value="tRNA-synt_2"/>
    <property type="match status" value="1"/>
</dbReference>
<dbReference type="Pfam" id="PF01336">
    <property type="entry name" value="tRNA_anti-codon"/>
    <property type="match status" value="1"/>
</dbReference>
<dbReference type="PRINTS" id="PR01042">
    <property type="entry name" value="TRNASYNTHASP"/>
</dbReference>
<dbReference type="SUPFAM" id="SSF55681">
    <property type="entry name" value="Class II aaRS and biotin synthetases"/>
    <property type="match status" value="1"/>
</dbReference>
<dbReference type="SUPFAM" id="SSF55261">
    <property type="entry name" value="GAD domain-like"/>
    <property type="match status" value="1"/>
</dbReference>
<dbReference type="SUPFAM" id="SSF50249">
    <property type="entry name" value="Nucleic acid-binding proteins"/>
    <property type="match status" value="1"/>
</dbReference>
<dbReference type="PROSITE" id="PS50862">
    <property type="entry name" value="AA_TRNA_LIGASE_II"/>
    <property type="match status" value="1"/>
</dbReference>
<accession>Q4ZWL5</accession>
<keyword id="KW-0030">Aminoacyl-tRNA synthetase</keyword>
<keyword id="KW-0067">ATP-binding</keyword>
<keyword id="KW-0963">Cytoplasm</keyword>
<keyword id="KW-0436">Ligase</keyword>
<keyword id="KW-0547">Nucleotide-binding</keyword>
<keyword id="KW-0648">Protein biosynthesis</keyword>
<feature type="chain" id="PRO_0000235548" description="Aspartate--tRNA(Asp/Asn) ligase">
    <location>
        <begin position="1"/>
        <end position="591"/>
    </location>
</feature>
<feature type="region of interest" description="Aspartate" evidence="1">
    <location>
        <begin position="198"/>
        <end position="201"/>
    </location>
</feature>
<feature type="binding site" evidence="1">
    <location>
        <position position="174"/>
    </location>
    <ligand>
        <name>L-aspartate</name>
        <dbReference type="ChEBI" id="CHEBI:29991"/>
    </ligand>
</feature>
<feature type="binding site" evidence="1">
    <location>
        <begin position="220"/>
        <end position="222"/>
    </location>
    <ligand>
        <name>ATP</name>
        <dbReference type="ChEBI" id="CHEBI:30616"/>
    </ligand>
</feature>
<feature type="binding site" evidence="1">
    <location>
        <position position="220"/>
    </location>
    <ligand>
        <name>L-aspartate</name>
        <dbReference type="ChEBI" id="CHEBI:29991"/>
    </ligand>
</feature>
<feature type="binding site" evidence="1">
    <location>
        <position position="229"/>
    </location>
    <ligand>
        <name>ATP</name>
        <dbReference type="ChEBI" id="CHEBI:30616"/>
    </ligand>
</feature>
<feature type="binding site" evidence="1">
    <location>
        <position position="450"/>
    </location>
    <ligand>
        <name>L-aspartate</name>
        <dbReference type="ChEBI" id="CHEBI:29991"/>
    </ligand>
</feature>
<feature type="binding site" evidence="1">
    <location>
        <position position="483"/>
    </location>
    <ligand>
        <name>ATP</name>
        <dbReference type="ChEBI" id="CHEBI:30616"/>
    </ligand>
</feature>
<feature type="binding site" evidence="1">
    <location>
        <position position="490"/>
    </location>
    <ligand>
        <name>L-aspartate</name>
        <dbReference type="ChEBI" id="CHEBI:29991"/>
    </ligand>
</feature>
<feature type="binding site" evidence="1">
    <location>
        <begin position="535"/>
        <end position="538"/>
    </location>
    <ligand>
        <name>ATP</name>
        <dbReference type="ChEBI" id="CHEBI:30616"/>
    </ligand>
</feature>
<feature type="site" description="Important for tRNA non-discrimination" evidence="1">
    <location>
        <position position="31"/>
    </location>
</feature>
<feature type="site" description="Important for tRNA non-discrimination" evidence="1">
    <location>
        <position position="82"/>
    </location>
</feature>
<evidence type="ECO:0000255" key="1">
    <source>
        <dbReference type="HAMAP-Rule" id="MF_00044"/>
    </source>
</evidence>